<sequence>MVTIVEVKQHIKKFAAGNELYLQEVLGCHYENDIYTFRVWAPNAQKVWLVGDFNDWDKSLEMSQTLDGVWEIKTSLPKEGQLYKFLVKQADGREVMKIDPMAFELEPRPGSAAVIVKLPNKKWLDGAWMGRNKRSNHFARPINIYEVHASSWKRHTDGSLYTLKDLQKELIPYVKEQGFNYIEFLPLTAHPLDASWGYQTIGYYALERTYGTPRELQDFVEACHKENIGVLADWVPGHFCINDDALAYYDGTPCYEFSEKWRAENKGWGALNFDLGKPEVQSFLLSSALFWLEFYHLDGLRVDAVSNMIYRDYDRSDGEWKTDKFGGNRNLEGIEFLQKLNRTIKGKHPECLMIAEESSAQVKITGRIEDGGLGFDFKWNMGWMNDILRFYEMDPLFRKFNFNLATFSFMYRMSENFILPLSHDEVVHGKRSLMNKMFGDRDKQFAQLRNLLTLQMTYPGKKLLFMGSEFGQYLEWRYNDGLDWAELKDELNAKMKHFDQDLNSFYLNEPALWQLEQREDSVQIIDADNKDESVLSFIRQGKTRHDFLIVILNFTPVDRKKITIGVPYAGKYCEVFNSARKEYGGSWNQEKQNLKTQNNSFKNFNYQVQLDIPGFSAVILKPVDVHIKRRINRKTKTK</sequence>
<reference key="1">
    <citation type="journal article" date="2005" name="Proc. Natl. Acad. Sci. U.S.A.">
        <title>Complete genome sequence of the probiotic lactic acid bacterium Lactobacillus acidophilus NCFM.</title>
        <authorList>
            <person name="Altermann E."/>
            <person name="Russell W.M."/>
            <person name="Azcarate-Peril M.A."/>
            <person name="Barrangou R."/>
            <person name="Buck B.L."/>
            <person name="McAuliffe O."/>
            <person name="Souther N."/>
            <person name="Dobson A."/>
            <person name="Duong T."/>
            <person name="Callanan M."/>
            <person name="Lick S."/>
            <person name="Hamrick A."/>
            <person name="Cano R."/>
            <person name="Klaenhammer T.R."/>
        </authorList>
    </citation>
    <scope>NUCLEOTIDE SEQUENCE [LARGE SCALE GENOMIC DNA]</scope>
    <source>
        <strain>ATCC 700396 / NCK56 / N2 / NCFM</strain>
    </source>
</reference>
<accession>Q5FL68</accession>
<organism>
    <name type="scientific">Lactobacillus acidophilus (strain ATCC 700396 / NCK56 / N2 / NCFM)</name>
    <dbReference type="NCBI Taxonomy" id="272621"/>
    <lineage>
        <taxon>Bacteria</taxon>
        <taxon>Bacillati</taxon>
        <taxon>Bacillota</taxon>
        <taxon>Bacilli</taxon>
        <taxon>Lactobacillales</taxon>
        <taxon>Lactobacillaceae</taxon>
        <taxon>Lactobacillus</taxon>
    </lineage>
</organism>
<keyword id="KW-0119">Carbohydrate metabolism</keyword>
<keyword id="KW-0320">Glycogen biosynthesis</keyword>
<keyword id="KW-0321">Glycogen metabolism</keyword>
<keyword id="KW-0328">Glycosyltransferase</keyword>
<keyword id="KW-1185">Reference proteome</keyword>
<keyword id="KW-0808">Transferase</keyword>
<name>GLGB_LACAC</name>
<feature type="chain" id="PRO_0000188711" description="1,4-alpha-glucan branching enzyme GlgB">
    <location>
        <begin position="1"/>
        <end position="638"/>
    </location>
</feature>
<feature type="active site" description="Nucleophile" evidence="1">
    <location>
        <position position="303"/>
    </location>
</feature>
<feature type="active site" description="Proton donor" evidence="1">
    <location>
        <position position="356"/>
    </location>
</feature>
<evidence type="ECO:0000255" key="1">
    <source>
        <dbReference type="HAMAP-Rule" id="MF_00685"/>
    </source>
</evidence>
<proteinExistence type="inferred from homology"/>
<gene>
    <name evidence="1" type="primary">glgB</name>
    <name type="ordered locus">LBA0680</name>
</gene>
<comment type="function">
    <text evidence="1">Catalyzes the formation of the alpha-1,6-glucosidic linkages in glycogen by scission of a 1,4-alpha-linked oligosaccharide from growing alpha-1,4-glucan chains and the subsequent attachment of the oligosaccharide to the alpha-1,6 position.</text>
</comment>
<comment type="catalytic activity">
    <reaction evidence="1">
        <text>Transfers a segment of a (1-&gt;4)-alpha-D-glucan chain to a primary hydroxy group in a similar glucan chain.</text>
        <dbReference type="EC" id="2.4.1.18"/>
    </reaction>
</comment>
<comment type="pathway">
    <text evidence="1">Glycan biosynthesis; glycogen biosynthesis.</text>
</comment>
<comment type="subunit">
    <text evidence="1">Monomer.</text>
</comment>
<comment type="similarity">
    <text evidence="1">Belongs to the glycosyl hydrolase 13 family. GlgB subfamily.</text>
</comment>
<dbReference type="EC" id="2.4.1.18" evidence="1"/>
<dbReference type="EMBL" id="CP000033">
    <property type="protein sequence ID" value="AAV42556.1"/>
    <property type="molecule type" value="Genomic_DNA"/>
</dbReference>
<dbReference type="RefSeq" id="WP_011254224.1">
    <property type="nucleotide sequence ID" value="NC_006814.3"/>
</dbReference>
<dbReference type="RefSeq" id="YP_193587.1">
    <property type="nucleotide sequence ID" value="NC_006814.3"/>
</dbReference>
<dbReference type="SMR" id="Q5FL68"/>
<dbReference type="STRING" id="272621.LBA0680"/>
<dbReference type="CAZy" id="CBM48">
    <property type="family name" value="Carbohydrate-Binding Module Family 48"/>
</dbReference>
<dbReference type="CAZy" id="GH13">
    <property type="family name" value="Glycoside Hydrolase Family 13"/>
</dbReference>
<dbReference type="KEGG" id="lac:LBA0680"/>
<dbReference type="PATRIC" id="fig|272621.13.peg.650"/>
<dbReference type="eggNOG" id="COG0296">
    <property type="taxonomic scope" value="Bacteria"/>
</dbReference>
<dbReference type="HOGENOM" id="CLU_004245_3_2_9"/>
<dbReference type="OrthoDB" id="9800174at2"/>
<dbReference type="BioCyc" id="LACI272621:G1G49-702-MONOMER"/>
<dbReference type="UniPathway" id="UPA00164"/>
<dbReference type="Proteomes" id="UP000006381">
    <property type="component" value="Chromosome"/>
</dbReference>
<dbReference type="GO" id="GO:0005829">
    <property type="term" value="C:cytosol"/>
    <property type="evidence" value="ECO:0007669"/>
    <property type="project" value="TreeGrafter"/>
</dbReference>
<dbReference type="GO" id="GO:0003844">
    <property type="term" value="F:1,4-alpha-glucan branching enzyme activity"/>
    <property type="evidence" value="ECO:0007669"/>
    <property type="project" value="UniProtKB-UniRule"/>
</dbReference>
<dbReference type="GO" id="GO:0043169">
    <property type="term" value="F:cation binding"/>
    <property type="evidence" value="ECO:0007669"/>
    <property type="project" value="InterPro"/>
</dbReference>
<dbReference type="GO" id="GO:0004553">
    <property type="term" value="F:hydrolase activity, hydrolyzing O-glycosyl compounds"/>
    <property type="evidence" value="ECO:0007669"/>
    <property type="project" value="InterPro"/>
</dbReference>
<dbReference type="GO" id="GO:0005978">
    <property type="term" value="P:glycogen biosynthetic process"/>
    <property type="evidence" value="ECO:0007669"/>
    <property type="project" value="UniProtKB-UniRule"/>
</dbReference>
<dbReference type="CDD" id="cd11322">
    <property type="entry name" value="AmyAc_Glg_BE"/>
    <property type="match status" value="1"/>
</dbReference>
<dbReference type="CDD" id="cd02855">
    <property type="entry name" value="E_set_GBE_prok_N"/>
    <property type="match status" value="1"/>
</dbReference>
<dbReference type="Gene3D" id="3.20.20.80">
    <property type="entry name" value="Glycosidases"/>
    <property type="match status" value="1"/>
</dbReference>
<dbReference type="Gene3D" id="2.60.40.1180">
    <property type="entry name" value="Golgi alpha-mannosidase II"/>
    <property type="match status" value="1"/>
</dbReference>
<dbReference type="Gene3D" id="2.60.40.10">
    <property type="entry name" value="Immunoglobulins"/>
    <property type="match status" value="1"/>
</dbReference>
<dbReference type="HAMAP" id="MF_00685">
    <property type="entry name" value="GlgB"/>
    <property type="match status" value="1"/>
</dbReference>
<dbReference type="InterPro" id="IPR006048">
    <property type="entry name" value="A-amylase/branching_C"/>
</dbReference>
<dbReference type="InterPro" id="IPR037439">
    <property type="entry name" value="Branching_enzy"/>
</dbReference>
<dbReference type="InterPro" id="IPR006407">
    <property type="entry name" value="GlgB"/>
</dbReference>
<dbReference type="InterPro" id="IPR044143">
    <property type="entry name" value="GlgB_N_E_set_prok"/>
</dbReference>
<dbReference type="InterPro" id="IPR006047">
    <property type="entry name" value="Glyco_hydro_13_cat_dom"/>
</dbReference>
<dbReference type="InterPro" id="IPR004193">
    <property type="entry name" value="Glyco_hydro_13_N"/>
</dbReference>
<dbReference type="InterPro" id="IPR013780">
    <property type="entry name" value="Glyco_hydro_b"/>
</dbReference>
<dbReference type="InterPro" id="IPR017853">
    <property type="entry name" value="Glycoside_hydrolase_SF"/>
</dbReference>
<dbReference type="InterPro" id="IPR013783">
    <property type="entry name" value="Ig-like_fold"/>
</dbReference>
<dbReference type="InterPro" id="IPR014756">
    <property type="entry name" value="Ig_E-set"/>
</dbReference>
<dbReference type="NCBIfam" id="TIGR01515">
    <property type="entry name" value="branching_enzym"/>
    <property type="match status" value="1"/>
</dbReference>
<dbReference type="NCBIfam" id="NF003811">
    <property type="entry name" value="PRK05402.1"/>
    <property type="match status" value="1"/>
</dbReference>
<dbReference type="NCBIfam" id="NF008967">
    <property type="entry name" value="PRK12313.1"/>
    <property type="match status" value="1"/>
</dbReference>
<dbReference type="PANTHER" id="PTHR43651">
    <property type="entry name" value="1,4-ALPHA-GLUCAN-BRANCHING ENZYME"/>
    <property type="match status" value="1"/>
</dbReference>
<dbReference type="PANTHER" id="PTHR43651:SF3">
    <property type="entry name" value="1,4-ALPHA-GLUCAN-BRANCHING ENZYME"/>
    <property type="match status" value="1"/>
</dbReference>
<dbReference type="Pfam" id="PF00128">
    <property type="entry name" value="Alpha-amylase"/>
    <property type="match status" value="1"/>
</dbReference>
<dbReference type="Pfam" id="PF02806">
    <property type="entry name" value="Alpha-amylase_C"/>
    <property type="match status" value="1"/>
</dbReference>
<dbReference type="Pfam" id="PF02922">
    <property type="entry name" value="CBM_48"/>
    <property type="match status" value="1"/>
</dbReference>
<dbReference type="PIRSF" id="PIRSF000463">
    <property type="entry name" value="GlgB"/>
    <property type="match status" value="1"/>
</dbReference>
<dbReference type="SMART" id="SM00642">
    <property type="entry name" value="Aamy"/>
    <property type="match status" value="1"/>
</dbReference>
<dbReference type="SUPFAM" id="SSF51445">
    <property type="entry name" value="(Trans)glycosidases"/>
    <property type="match status" value="1"/>
</dbReference>
<dbReference type="SUPFAM" id="SSF81296">
    <property type="entry name" value="E set domains"/>
    <property type="match status" value="1"/>
</dbReference>
<dbReference type="SUPFAM" id="SSF51011">
    <property type="entry name" value="Glycosyl hydrolase domain"/>
    <property type="match status" value="1"/>
</dbReference>
<protein>
    <recommendedName>
        <fullName evidence="1">1,4-alpha-glucan branching enzyme GlgB</fullName>
        <ecNumber evidence="1">2.4.1.18</ecNumber>
    </recommendedName>
    <alternativeName>
        <fullName evidence="1">1,4-alpha-D-glucan:1,4-alpha-D-glucan 6-glucosyl-transferase</fullName>
    </alternativeName>
    <alternativeName>
        <fullName evidence="1">Alpha-(1-&gt;4)-glucan branching enzyme</fullName>
    </alternativeName>
    <alternativeName>
        <fullName evidence="1">Glycogen branching enzyme</fullName>
        <shortName evidence="1">BE</shortName>
    </alternativeName>
</protein>